<comment type="function">
    <text evidence="1">Key component of the proton channel; it plays a direct role in the translocation of protons across the membrane.</text>
</comment>
<comment type="subunit">
    <text evidence="1">F-type ATPases have 2 components, CF(1) - the catalytic core - and CF(0) - the membrane proton channel. CF(1) has five subunits: alpha(3), beta(3), gamma(1), delta(1), epsilon(1). CF(0) has four main subunits: a, b, b' and c.</text>
</comment>
<comment type="subcellular location">
    <subcellularLocation>
        <location evidence="1">Plastid</location>
        <location evidence="1">Chloroplast thylakoid membrane</location>
        <topology evidence="1">Multi-pass membrane protein</topology>
    </subcellularLocation>
</comment>
<comment type="similarity">
    <text evidence="1">Belongs to the ATPase A chain family.</text>
</comment>
<sequence>MYSLNPSQIEASNLLYQVSSVEVGKHLYWQLGMFQVHGQVLITSWVVMAIIIITSVIASRNLQPIPSGTQNFLEYVLEFIRDLTKTQVGEEEYRSWVPFVGTLFLFIFISNWSGALIPWRLIELPSGELAAPTNDINTTVALALLTSVAYFYAGLSKKGLSYFGKYIQPTPILLPINILEDFTKPLSLSFRLFGNILADELVVAVLISLVPLVIPVPMMLLGLFTSGIQALIFATLAAAYIGESLEGHH</sequence>
<accession>Q19VA2</accession>
<dbReference type="EMBL" id="DQ422812">
    <property type="protein sequence ID" value="ABD62174.2"/>
    <property type="molecule type" value="Genomic_DNA"/>
</dbReference>
<dbReference type="RefSeq" id="YP_001019100.1">
    <property type="nucleotide sequence ID" value="NC_008822.1"/>
</dbReference>
<dbReference type="SMR" id="Q19VA2"/>
<dbReference type="GeneID" id="4783230"/>
<dbReference type="GO" id="GO:0009535">
    <property type="term" value="C:chloroplast thylakoid membrane"/>
    <property type="evidence" value="ECO:0007669"/>
    <property type="project" value="UniProtKB-SubCell"/>
</dbReference>
<dbReference type="GO" id="GO:0005886">
    <property type="term" value="C:plasma membrane"/>
    <property type="evidence" value="ECO:0007669"/>
    <property type="project" value="UniProtKB-UniRule"/>
</dbReference>
<dbReference type="GO" id="GO:0045259">
    <property type="term" value="C:proton-transporting ATP synthase complex"/>
    <property type="evidence" value="ECO:0007669"/>
    <property type="project" value="UniProtKB-KW"/>
</dbReference>
<dbReference type="GO" id="GO:0046933">
    <property type="term" value="F:proton-transporting ATP synthase activity, rotational mechanism"/>
    <property type="evidence" value="ECO:0007669"/>
    <property type="project" value="UniProtKB-UniRule"/>
</dbReference>
<dbReference type="CDD" id="cd00310">
    <property type="entry name" value="ATP-synt_Fo_a_6"/>
    <property type="match status" value="1"/>
</dbReference>
<dbReference type="FunFam" id="1.20.120.220:FF:000001">
    <property type="entry name" value="ATP synthase subunit a, chloroplastic"/>
    <property type="match status" value="1"/>
</dbReference>
<dbReference type="Gene3D" id="1.20.120.220">
    <property type="entry name" value="ATP synthase, F0 complex, subunit A"/>
    <property type="match status" value="1"/>
</dbReference>
<dbReference type="HAMAP" id="MF_01393">
    <property type="entry name" value="ATP_synth_a_bact"/>
    <property type="match status" value="1"/>
</dbReference>
<dbReference type="InterPro" id="IPR045082">
    <property type="entry name" value="ATP_syn_F0_a_bact/chloroplast"/>
</dbReference>
<dbReference type="InterPro" id="IPR000568">
    <property type="entry name" value="ATP_synth_F0_asu"/>
</dbReference>
<dbReference type="InterPro" id="IPR023011">
    <property type="entry name" value="ATP_synth_F0_asu_AS"/>
</dbReference>
<dbReference type="InterPro" id="IPR035908">
    <property type="entry name" value="F0_ATP_A_sf"/>
</dbReference>
<dbReference type="NCBIfam" id="TIGR01131">
    <property type="entry name" value="ATP_synt_6_or_A"/>
    <property type="match status" value="1"/>
</dbReference>
<dbReference type="PANTHER" id="PTHR42823">
    <property type="entry name" value="ATP SYNTHASE SUBUNIT A, CHLOROPLASTIC"/>
    <property type="match status" value="1"/>
</dbReference>
<dbReference type="PANTHER" id="PTHR42823:SF3">
    <property type="entry name" value="ATP SYNTHASE SUBUNIT A, CHLOROPLASTIC"/>
    <property type="match status" value="1"/>
</dbReference>
<dbReference type="Pfam" id="PF00119">
    <property type="entry name" value="ATP-synt_A"/>
    <property type="match status" value="1"/>
</dbReference>
<dbReference type="PRINTS" id="PR00123">
    <property type="entry name" value="ATPASEA"/>
</dbReference>
<dbReference type="SUPFAM" id="SSF81336">
    <property type="entry name" value="F1F0 ATP synthase subunit A"/>
    <property type="match status" value="1"/>
</dbReference>
<dbReference type="PROSITE" id="PS00449">
    <property type="entry name" value="ATPASE_A"/>
    <property type="match status" value="1"/>
</dbReference>
<feature type="chain" id="PRO_0000362541" description="ATP synthase subunit a, chloroplastic">
    <location>
        <begin position="1"/>
        <end position="249"/>
    </location>
</feature>
<feature type="transmembrane region" description="Helical" evidence="1">
    <location>
        <begin position="38"/>
        <end position="58"/>
    </location>
</feature>
<feature type="transmembrane region" description="Helical" evidence="1">
    <location>
        <begin position="97"/>
        <end position="117"/>
    </location>
</feature>
<feature type="transmembrane region" description="Helical" evidence="1">
    <location>
        <begin position="136"/>
        <end position="156"/>
    </location>
</feature>
<feature type="transmembrane region" description="Helical" evidence="1">
    <location>
        <begin position="201"/>
        <end position="221"/>
    </location>
</feature>
<feature type="transmembrane region" description="Helical" evidence="1">
    <location>
        <begin position="222"/>
        <end position="242"/>
    </location>
</feature>
<organism>
    <name type="scientific">Chlorokybus atmophyticus</name>
    <name type="common">Soil alga</name>
    <dbReference type="NCBI Taxonomy" id="3144"/>
    <lineage>
        <taxon>Eukaryota</taxon>
        <taxon>Viridiplantae</taxon>
        <taxon>Streptophyta</taxon>
        <taxon>Chlorokybophyceae</taxon>
        <taxon>Chlorokybales</taxon>
        <taxon>Chlorokybaceae</taxon>
        <taxon>Chlorokybus</taxon>
    </lineage>
</organism>
<gene>
    <name evidence="1" type="primary">atpI</name>
</gene>
<reference key="1">
    <citation type="journal article" date="2007" name="BMC Biol.">
        <title>A clade uniting the green algae Mesostigma viride and Chlorokybus atmophyticus represents the deepest branch of the Streptophyta in chloroplast genome-based phylogenies.</title>
        <authorList>
            <person name="Lemieux C."/>
            <person name="Otis C."/>
            <person name="Turmel M."/>
        </authorList>
    </citation>
    <scope>NUCLEOTIDE SEQUENCE [LARGE SCALE GENOMIC DNA]</scope>
    <source>
        <strain>SAG 48.80</strain>
    </source>
</reference>
<geneLocation type="chloroplast"/>
<evidence type="ECO:0000255" key="1">
    <source>
        <dbReference type="HAMAP-Rule" id="MF_01393"/>
    </source>
</evidence>
<protein>
    <recommendedName>
        <fullName evidence="1">ATP synthase subunit a, chloroplastic</fullName>
    </recommendedName>
    <alternativeName>
        <fullName evidence="1">ATP synthase F0 sector subunit a</fullName>
    </alternativeName>
    <alternativeName>
        <fullName evidence="1">F-ATPase subunit IV</fullName>
    </alternativeName>
</protein>
<keyword id="KW-0066">ATP synthesis</keyword>
<keyword id="KW-0138">CF(0)</keyword>
<keyword id="KW-0150">Chloroplast</keyword>
<keyword id="KW-0375">Hydrogen ion transport</keyword>
<keyword id="KW-0406">Ion transport</keyword>
<keyword id="KW-0472">Membrane</keyword>
<keyword id="KW-0934">Plastid</keyword>
<keyword id="KW-0793">Thylakoid</keyword>
<keyword id="KW-0812">Transmembrane</keyword>
<keyword id="KW-1133">Transmembrane helix</keyword>
<keyword id="KW-0813">Transport</keyword>
<proteinExistence type="inferred from homology"/>
<name>ATPI_CHLAT</name>